<keyword id="KW-0963">Cytoplasm</keyword>
<keyword id="KW-0597">Phosphoprotein</keyword>
<keyword id="KW-0598">Phosphotransferase system</keyword>
<keyword id="KW-0762">Sugar transport</keyword>
<keyword id="KW-0813">Transport</keyword>
<sequence>MEQKSYVIIDETGIHARPATMLVQTASKFDSDIQLEYNGKKVNLKSIMGVMSLGVGKDAEITIYADGSDETDAIEAITDILSKEGLTK</sequence>
<evidence type="ECO:0000250" key="1"/>
<evidence type="ECO:0000255" key="2">
    <source>
        <dbReference type="PROSITE-ProRule" id="PRU00681"/>
    </source>
</evidence>
<evidence type="ECO:0000305" key="3"/>
<evidence type="ECO:0000305" key="4">
    <source>
    </source>
</evidence>
<comment type="function">
    <text evidence="1">General (non sugar-specific) component of the phosphoenolpyruvate-dependent sugar phosphotransferase system (sugar PTS). This major carbohydrate active-transport system catalyzes the phosphorylation of incoming sugar substrates concomitantly with their translocation across the cell membrane. The phosphoryl group from phosphoenolpyruvate (PEP) is transferred to the phosphoryl carrier protein HPr by enzyme I. Phospho-HPr then transfers it to the PTS EIIA domain.</text>
</comment>
<comment type="activity regulation">
    <text evidence="1">Phosphorylation on Ser-46 inhibits the phosphoryl transfer from enzyme I to HPr.</text>
</comment>
<comment type="subcellular location">
    <subcellularLocation>
        <location evidence="1">Cytoplasm</location>
    </subcellularLocation>
</comment>
<comment type="similarity">
    <text evidence="3">Belongs to the HPr family.</text>
</comment>
<name>PTHP_STAXY</name>
<dbReference type="EMBL" id="AF316496">
    <property type="protein sequence ID" value="AAG38583.1"/>
    <property type="molecule type" value="Genomic_DNA"/>
</dbReference>
<dbReference type="RefSeq" id="WP_017724134.1">
    <property type="nucleotide sequence ID" value="NZ_BKAZ01000024.1"/>
</dbReference>
<dbReference type="SMR" id="Q9EYQ9"/>
<dbReference type="STRING" id="1288.AWC37_02730"/>
<dbReference type="iPTMnet" id="Q9EYQ9"/>
<dbReference type="GeneID" id="79050752"/>
<dbReference type="eggNOG" id="COG1925">
    <property type="taxonomic scope" value="Bacteria"/>
</dbReference>
<dbReference type="OrthoDB" id="9809047at2"/>
<dbReference type="GO" id="GO:0005737">
    <property type="term" value="C:cytoplasm"/>
    <property type="evidence" value="ECO:0007669"/>
    <property type="project" value="UniProtKB-SubCell"/>
</dbReference>
<dbReference type="GO" id="GO:0009401">
    <property type="term" value="P:phosphoenolpyruvate-dependent sugar phosphotransferase system"/>
    <property type="evidence" value="ECO:0007669"/>
    <property type="project" value="UniProtKB-KW"/>
</dbReference>
<dbReference type="CDD" id="cd00367">
    <property type="entry name" value="PTS-HPr_like"/>
    <property type="match status" value="1"/>
</dbReference>
<dbReference type="Gene3D" id="3.30.1340.10">
    <property type="entry name" value="HPr-like"/>
    <property type="match status" value="1"/>
</dbReference>
<dbReference type="InterPro" id="IPR050399">
    <property type="entry name" value="HPr"/>
</dbReference>
<dbReference type="InterPro" id="IPR000032">
    <property type="entry name" value="HPr-like"/>
</dbReference>
<dbReference type="InterPro" id="IPR035895">
    <property type="entry name" value="HPr-like_sf"/>
</dbReference>
<dbReference type="InterPro" id="IPR001020">
    <property type="entry name" value="PTS_HPr_His_P_site"/>
</dbReference>
<dbReference type="InterPro" id="IPR002114">
    <property type="entry name" value="PTS_HPr_Ser_P_site"/>
</dbReference>
<dbReference type="NCBIfam" id="NF010352">
    <property type="entry name" value="PRK13780.1"/>
    <property type="match status" value="1"/>
</dbReference>
<dbReference type="NCBIfam" id="TIGR01003">
    <property type="entry name" value="PTS_HPr_family"/>
    <property type="match status" value="1"/>
</dbReference>
<dbReference type="PANTHER" id="PTHR33705">
    <property type="entry name" value="PHOSPHOCARRIER PROTEIN HPR"/>
    <property type="match status" value="1"/>
</dbReference>
<dbReference type="PANTHER" id="PTHR33705:SF2">
    <property type="entry name" value="PHOSPHOCARRIER PROTEIN NPR"/>
    <property type="match status" value="1"/>
</dbReference>
<dbReference type="Pfam" id="PF00381">
    <property type="entry name" value="PTS-HPr"/>
    <property type="match status" value="1"/>
</dbReference>
<dbReference type="PRINTS" id="PR00107">
    <property type="entry name" value="PHOSPHOCPHPR"/>
</dbReference>
<dbReference type="SUPFAM" id="SSF55594">
    <property type="entry name" value="HPr-like"/>
    <property type="match status" value="1"/>
</dbReference>
<dbReference type="PROSITE" id="PS51350">
    <property type="entry name" value="PTS_HPR_DOM"/>
    <property type="match status" value="1"/>
</dbReference>
<dbReference type="PROSITE" id="PS00369">
    <property type="entry name" value="PTS_HPR_HIS"/>
    <property type="match status" value="1"/>
</dbReference>
<dbReference type="PROSITE" id="PS00589">
    <property type="entry name" value="PTS_HPR_SER"/>
    <property type="match status" value="1"/>
</dbReference>
<organism>
    <name type="scientific">Staphylococcus xylosus</name>
    <dbReference type="NCBI Taxonomy" id="1288"/>
    <lineage>
        <taxon>Bacteria</taxon>
        <taxon>Bacillati</taxon>
        <taxon>Bacillota</taxon>
        <taxon>Bacilli</taxon>
        <taxon>Bacillales</taxon>
        <taxon>Staphylococcaceae</taxon>
        <taxon>Staphylococcus</taxon>
    </lineage>
</organism>
<accession>Q9EYQ9</accession>
<reference key="1">
    <citation type="submission" date="2000-10" db="EMBL/GenBank/DDBJ databases">
        <title>Contribution of the phosphotransferase system to catabolite control protein A-dependent repression in Staphylococcus xylosus.</title>
        <authorList>
            <person name="Jankovic I."/>
            <person name="Meyer J."/>
            <person name="Brueckner R."/>
        </authorList>
    </citation>
    <scope>NUCLEOTIDE SEQUENCE [GENOMIC DNA]</scope>
    <source>
        <strain>DSM 20267 / Isolate C2A</strain>
    </source>
</reference>
<reference key="2">
    <citation type="journal article" date="2000" name="J. Bacteriol.">
        <title>Characterization of an HPr kinase mutant of Staphylococcus xylosus.</title>
        <authorList>
            <person name="Huynh P.L."/>
            <person name="Jankovic I."/>
            <person name="Schnell N."/>
            <person name="Brueckner R."/>
        </authorList>
    </citation>
    <scope>PHOSPHORYLATION AT SER-46</scope>
    <source>
        <strain>DSM 20267 / Isolate C2A</strain>
    </source>
</reference>
<protein>
    <recommendedName>
        <fullName>Phosphocarrier protein HPr</fullName>
    </recommendedName>
    <alternativeName>
        <fullName>Histidine-containing protein</fullName>
    </alternativeName>
</protein>
<proteinExistence type="evidence at protein level"/>
<gene>
    <name type="primary">ptsH</name>
</gene>
<feature type="chain" id="PRO_0000107880" description="Phosphocarrier protein HPr">
    <location>
        <begin position="1"/>
        <end position="88"/>
    </location>
</feature>
<feature type="domain" description="HPr" evidence="2">
    <location>
        <begin position="1"/>
        <end position="88"/>
    </location>
</feature>
<feature type="active site" description="Pros-phosphohistidine intermediate" evidence="2">
    <location>
        <position position="15"/>
    </location>
</feature>
<feature type="modified residue" description="Phosphoserine; by HPrK/P" evidence="4">
    <location>
        <position position="46"/>
    </location>
</feature>